<dbReference type="EMBL" id="AY204203">
    <property type="protein sequence ID" value="AAO39204.1"/>
    <property type="molecule type" value="mRNA"/>
</dbReference>
<dbReference type="EMBL" id="FO081753">
    <property type="protein sequence ID" value="CCD74245.1"/>
    <property type="molecule type" value="Genomic_DNA"/>
</dbReference>
<dbReference type="RefSeq" id="NP_001256014.1">
    <property type="nucleotide sequence ID" value="NM_001269085.2"/>
</dbReference>
<dbReference type="FunCoup" id="O16662">
    <property type="interactions" value="227"/>
</dbReference>
<dbReference type="STRING" id="6239.T27B7.4a.1"/>
<dbReference type="PaxDb" id="6239-T27B7.4a"/>
<dbReference type="EnsemblMetazoa" id="T27B7.4a.1">
    <property type="protein sequence ID" value="T27B7.4a.1"/>
    <property type="gene ID" value="WBGene00003705"/>
</dbReference>
<dbReference type="GeneID" id="178708"/>
<dbReference type="KEGG" id="cel:CELE_T27B7.4"/>
<dbReference type="UCSC" id="T27B7.4.1">
    <property type="organism name" value="c. elegans"/>
</dbReference>
<dbReference type="AGR" id="WB:WBGene00003705"/>
<dbReference type="CTD" id="178708"/>
<dbReference type="WormBase" id="T27B7.4a">
    <property type="protein sequence ID" value="CE35785"/>
    <property type="gene ID" value="WBGene00003705"/>
    <property type="gene designation" value="nhr-115"/>
</dbReference>
<dbReference type="eggNOG" id="KOG3575">
    <property type="taxonomic scope" value="Eukaryota"/>
</dbReference>
<dbReference type="GeneTree" id="ENSGT00970000195869"/>
<dbReference type="HOGENOM" id="CLU_007368_7_1_1"/>
<dbReference type="InParanoid" id="O16662"/>
<dbReference type="OMA" id="FMDIIEY"/>
<dbReference type="OrthoDB" id="5816380at2759"/>
<dbReference type="PhylomeDB" id="O16662"/>
<dbReference type="PRO" id="PR:O16662"/>
<dbReference type="Proteomes" id="UP000001940">
    <property type="component" value="Chromosome V"/>
</dbReference>
<dbReference type="Bgee" id="WBGene00003705">
    <property type="expression patterns" value="Expressed in adult organism and 2 other cell types or tissues"/>
</dbReference>
<dbReference type="ExpressionAtlas" id="O16662">
    <property type="expression patterns" value="baseline and differential"/>
</dbReference>
<dbReference type="GO" id="GO:0005634">
    <property type="term" value="C:nucleus"/>
    <property type="evidence" value="ECO:0007669"/>
    <property type="project" value="UniProtKB-SubCell"/>
</dbReference>
<dbReference type="GO" id="GO:0003700">
    <property type="term" value="F:DNA-binding transcription factor activity"/>
    <property type="evidence" value="ECO:0007669"/>
    <property type="project" value="InterPro"/>
</dbReference>
<dbReference type="GO" id="GO:0000978">
    <property type="term" value="F:RNA polymerase II cis-regulatory region sequence-specific DNA binding"/>
    <property type="evidence" value="ECO:0007669"/>
    <property type="project" value="InterPro"/>
</dbReference>
<dbReference type="GO" id="GO:0008270">
    <property type="term" value="F:zinc ion binding"/>
    <property type="evidence" value="ECO:0007669"/>
    <property type="project" value="UniProtKB-KW"/>
</dbReference>
<dbReference type="GO" id="GO:0045087">
    <property type="term" value="P:innate immune response"/>
    <property type="evidence" value="ECO:0007007"/>
    <property type="project" value="WormBase"/>
</dbReference>
<dbReference type="CDD" id="cd06960">
    <property type="entry name" value="NR_DBD_HNF4A"/>
    <property type="match status" value="1"/>
</dbReference>
<dbReference type="Gene3D" id="3.30.50.10">
    <property type="entry name" value="Erythroid Transcription Factor GATA-1, subunit A"/>
    <property type="match status" value="1"/>
</dbReference>
<dbReference type="Gene3D" id="1.10.565.10">
    <property type="entry name" value="Retinoid X Receptor"/>
    <property type="match status" value="1"/>
</dbReference>
<dbReference type="InterPro" id="IPR051152">
    <property type="entry name" value="C.elegans_Orphan_NR"/>
</dbReference>
<dbReference type="InterPro" id="IPR049636">
    <property type="entry name" value="HNF4-like_DBD"/>
</dbReference>
<dbReference type="InterPro" id="IPR035500">
    <property type="entry name" value="NHR-like_dom_sf"/>
</dbReference>
<dbReference type="InterPro" id="IPR000536">
    <property type="entry name" value="Nucl_hrmn_rcpt_lig-bd"/>
</dbReference>
<dbReference type="InterPro" id="IPR001628">
    <property type="entry name" value="Znf_hrmn_rcpt"/>
</dbReference>
<dbReference type="InterPro" id="IPR013088">
    <property type="entry name" value="Znf_NHR/GATA"/>
</dbReference>
<dbReference type="PANTHER" id="PTHR45680:SF34">
    <property type="entry name" value="NR LBD DOMAIN-CONTAINING PROTEIN-RELATED"/>
    <property type="match status" value="1"/>
</dbReference>
<dbReference type="PANTHER" id="PTHR45680">
    <property type="entry name" value="NUCLEAR HORMONE RECEPTOR FAMILY"/>
    <property type="match status" value="1"/>
</dbReference>
<dbReference type="Pfam" id="PF00104">
    <property type="entry name" value="Hormone_recep"/>
    <property type="match status" value="1"/>
</dbReference>
<dbReference type="Pfam" id="PF00105">
    <property type="entry name" value="zf-C4"/>
    <property type="match status" value="1"/>
</dbReference>
<dbReference type="PRINTS" id="PR00047">
    <property type="entry name" value="STROIDFINGER"/>
</dbReference>
<dbReference type="SMART" id="SM00430">
    <property type="entry name" value="HOLI"/>
    <property type="match status" value="1"/>
</dbReference>
<dbReference type="SMART" id="SM00399">
    <property type="entry name" value="ZnF_C4"/>
    <property type="match status" value="1"/>
</dbReference>
<dbReference type="SUPFAM" id="SSF57716">
    <property type="entry name" value="Glucocorticoid receptor-like (DNA-binding domain)"/>
    <property type="match status" value="1"/>
</dbReference>
<dbReference type="SUPFAM" id="SSF48508">
    <property type="entry name" value="Nuclear receptor ligand-binding domain"/>
    <property type="match status" value="1"/>
</dbReference>
<dbReference type="PROSITE" id="PS51843">
    <property type="entry name" value="NR_LBD"/>
    <property type="match status" value="1"/>
</dbReference>
<dbReference type="PROSITE" id="PS00031">
    <property type="entry name" value="NUCLEAR_REC_DBD_1"/>
    <property type="match status" value="1"/>
</dbReference>
<dbReference type="PROSITE" id="PS51030">
    <property type="entry name" value="NUCLEAR_REC_DBD_2"/>
    <property type="match status" value="1"/>
</dbReference>
<organism>
    <name type="scientific">Caenorhabditis elegans</name>
    <dbReference type="NCBI Taxonomy" id="6239"/>
    <lineage>
        <taxon>Eukaryota</taxon>
        <taxon>Metazoa</taxon>
        <taxon>Ecdysozoa</taxon>
        <taxon>Nematoda</taxon>
        <taxon>Chromadorea</taxon>
        <taxon>Rhabditida</taxon>
        <taxon>Rhabditina</taxon>
        <taxon>Rhabditomorpha</taxon>
        <taxon>Rhabditoidea</taxon>
        <taxon>Rhabditidae</taxon>
        <taxon>Peloderinae</taxon>
        <taxon>Caenorhabditis</taxon>
    </lineage>
</organism>
<evidence type="ECO:0000255" key="1">
    <source>
        <dbReference type="PROSITE-ProRule" id="PRU00407"/>
    </source>
</evidence>
<evidence type="ECO:0000255" key="2">
    <source>
        <dbReference type="PROSITE-ProRule" id="PRU01189"/>
    </source>
</evidence>
<evidence type="ECO:0000305" key="3"/>
<feature type="chain" id="PRO_0000053803" description="Nuclear hormone receptor family member nhr-115">
    <location>
        <begin position="1"/>
        <end position="391"/>
    </location>
</feature>
<feature type="domain" description="NR LBD" evidence="2">
    <location>
        <begin position="130"/>
        <end position="388"/>
    </location>
</feature>
<feature type="DNA-binding region" description="Nuclear receptor" evidence="1">
    <location>
        <begin position="5"/>
        <end position="77"/>
    </location>
</feature>
<feature type="zinc finger region" description="NR C4-type" evidence="1">
    <location>
        <begin position="8"/>
        <end position="28"/>
    </location>
</feature>
<feature type="zinc finger region" description="NR C4-type; atypical" evidence="1">
    <location>
        <begin position="41"/>
        <end position="65"/>
    </location>
</feature>
<accession>O16662</accession>
<accession>Q86PI5</accession>
<keyword id="KW-0238">DNA-binding</keyword>
<keyword id="KW-0479">Metal-binding</keyword>
<keyword id="KW-0539">Nucleus</keyword>
<keyword id="KW-0675">Receptor</keyword>
<keyword id="KW-1185">Reference proteome</keyword>
<keyword id="KW-0804">Transcription</keyword>
<keyword id="KW-0805">Transcription regulation</keyword>
<keyword id="KW-0862">Zinc</keyword>
<keyword id="KW-0863">Zinc-finger</keyword>
<proteinExistence type="evidence at transcript level"/>
<comment type="function">
    <text>Orphan nuclear receptor.</text>
</comment>
<comment type="subcellular location">
    <subcellularLocation>
        <location evidence="1">Nucleus</location>
    </subcellularLocation>
</comment>
<comment type="similarity">
    <text evidence="3">Belongs to the nuclear hormone receptor family.</text>
</comment>
<gene>
    <name type="primary">nhr-115</name>
    <name type="ORF">T27B7.4</name>
</gene>
<reference key="1">
    <citation type="journal article" date="2005" name="J. Mol. Evol.">
        <title>Explosive lineage-specific expansion of the orphan nuclear receptor HNF4 in nematodes.</title>
        <authorList>
            <person name="Robinson-Rechavi M."/>
            <person name="Maina C.V."/>
            <person name="Gissendanner C.R."/>
            <person name="Laudet V."/>
            <person name="Sluder A."/>
        </authorList>
    </citation>
    <scope>NUCLEOTIDE SEQUENCE [MRNA]</scope>
</reference>
<reference key="2">
    <citation type="journal article" date="1998" name="Science">
        <title>Genome sequence of the nematode C. elegans: a platform for investigating biology.</title>
        <authorList>
            <consortium name="The C. elegans sequencing consortium"/>
        </authorList>
    </citation>
    <scope>NUCLEOTIDE SEQUENCE [LARGE SCALE GENOMIC DNA]</scope>
    <source>
        <strain>Bristol N2</strain>
    </source>
</reference>
<protein>
    <recommendedName>
        <fullName>Nuclear hormone receptor family member nhr-115</fullName>
    </recommendedName>
</protein>
<sequence length="391" mass="46289">MKKVLFPCQICGQNSHGTHFGIVSCRACAAFFRRSVNSKWARKGCLTNFKDKGSCFCKPCRLRKCVEIGMDASKFQYDRDAISAIKHPKIFPSVSYYVGRPEFLMFSDSNVTSQKTFIDVQNLVFEVSRYLDHGCETPIYAENQLKKLTLGFKLMQFDYQNVKFFDKIGKAEFIDIIEYYFLTVAKWIAHFDEFRKLDQSLQIKLLQAIWHVWSKIHKCASTAFYRKSNPNAKPTQKILRNVCMDRMHVHKLDTSWMSDYPTEHVTRFMLTHHVYDFKIVESLLKLDPTDVELTFMFAQLCFEYAGKRFQGEILKITDHFQQVLSNDLHHYYITDQRRERYFQRLTDLMKVNNLIQRSIWETRPHRELGRVFEISKLEFSHPEMFDDSGFC</sequence>
<name>NH115_CAEEL</name>